<protein>
    <recommendedName>
        <fullName evidence="1">5'-nucleotidase SurE</fullName>
        <ecNumber evidence="1">3.1.3.5</ecNumber>
    </recommendedName>
    <alternativeName>
        <fullName evidence="1">Nucleoside 5'-monophosphate phosphohydrolase</fullName>
    </alternativeName>
</protein>
<sequence length="253" mass="27390">MHILVTNDDGIHHPGLAALRDGLARDHRVQVVAPDRERSAIAHAITLLTPLRAFSQTNGNGIPSWAVNGTPADCVKLGVLELLGEKPDLVVSGINPGPNVGVNLNYSGTVSAAREAALLGIPAIAVSVSNPYGTHFSDAARFMQDLVADVAERGLPKGVFLNVNLPDVPMEEIAGVRICRQGIARLEEAFHVRKDPRNQPYYWQGSETQLFGESPDEDGVALRENCIAVTPVQCDMTDYGFLNQLKEWKVEKP</sequence>
<dbReference type="EC" id="3.1.3.5" evidence="1"/>
<dbReference type="EMBL" id="CP001322">
    <property type="protein sequence ID" value="ACL05509.1"/>
    <property type="molecule type" value="Genomic_DNA"/>
</dbReference>
<dbReference type="RefSeq" id="WP_015948560.1">
    <property type="nucleotide sequence ID" value="NC_011768.1"/>
</dbReference>
<dbReference type="SMR" id="B8FC91"/>
<dbReference type="KEGG" id="dal:Dalk_3823"/>
<dbReference type="eggNOG" id="COG0496">
    <property type="taxonomic scope" value="Bacteria"/>
</dbReference>
<dbReference type="HOGENOM" id="CLU_045192_1_3_7"/>
<dbReference type="Proteomes" id="UP000000739">
    <property type="component" value="Chromosome"/>
</dbReference>
<dbReference type="GO" id="GO:0005737">
    <property type="term" value="C:cytoplasm"/>
    <property type="evidence" value="ECO:0007669"/>
    <property type="project" value="UniProtKB-SubCell"/>
</dbReference>
<dbReference type="GO" id="GO:0008254">
    <property type="term" value="F:3'-nucleotidase activity"/>
    <property type="evidence" value="ECO:0007669"/>
    <property type="project" value="TreeGrafter"/>
</dbReference>
<dbReference type="GO" id="GO:0008253">
    <property type="term" value="F:5'-nucleotidase activity"/>
    <property type="evidence" value="ECO:0007669"/>
    <property type="project" value="UniProtKB-UniRule"/>
</dbReference>
<dbReference type="GO" id="GO:0004309">
    <property type="term" value="F:exopolyphosphatase activity"/>
    <property type="evidence" value="ECO:0007669"/>
    <property type="project" value="TreeGrafter"/>
</dbReference>
<dbReference type="GO" id="GO:0046872">
    <property type="term" value="F:metal ion binding"/>
    <property type="evidence" value="ECO:0007669"/>
    <property type="project" value="UniProtKB-UniRule"/>
</dbReference>
<dbReference type="GO" id="GO:0000166">
    <property type="term" value="F:nucleotide binding"/>
    <property type="evidence" value="ECO:0007669"/>
    <property type="project" value="UniProtKB-KW"/>
</dbReference>
<dbReference type="FunFam" id="3.40.1210.10:FF:000001">
    <property type="entry name" value="5'/3'-nucleotidase SurE"/>
    <property type="match status" value="1"/>
</dbReference>
<dbReference type="Gene3D" id="3.40.1210.10">
    <property type="entry name" value="Survival protein SurE-like phosphatase/nucleotidase"/>
    <property type="match status" value="1"/>
</dbReference>
<dbReference type="HAMAP" id="MF_00060">
    <property type="entry name" value="SurE"/>
    <property type="match status" value="1"/>
</dbReference>
<dbReference type="InterPro" id="IPR030048">
    <property type="entry name" value="SurE"/>
</dbReference>
<dbReference type="InterPro" id="IPR002828">
    <property type="entry name" value="SurE-like_Pase/nucleotidase"/>
</dbReference>
<dbReference type="InterPro" id="IPR036523">
    <property type="entry name" value="SurE-like_sf"/>
</dbReference>
<dbReference type="NCBIfam" id="NF001490">
    <property type="entry name" value="PRK00346.1-4"/>
    <property type="match status" value="1"/>
</dbReference>
<dbReference type="NCBIfam" id="NF001492">
    <property type="entry name" value="PRK00346.2-2"/>
    <property type="match status" value="1"/>
</dbReference>
<dbReference type="NCBIfam" id="TIGR00087">
    <property type="entry name" value="surE"/>
    <property type="match status" value="1"/>
</dbReference>
<dbReference type="PANTHER" id="PTHR30457">
    <property type="entry name" value="5'-NUCLEOTIDASE SURE"/>
    <property type="match status" value="1"/>
</dbReference>
<dbReference type="PANTHER" id="PTHR30457:SF12">
    <property type="entry name" value="5'_3'-NUCLEOTIDASE SURE"/>
    <property type="match status" value="1"/>
</dbReference>
<dbReference type="Pfam" id="PF01975">
    <property type="entry name" value="SurE"/>
    <property type="match status" value="1"/>
</dbReference>
<dbReference type="SUPFAM" id="SSF64167">
    <property type="entry name" value="SurE-like"/>
    <property type="match status" value="1"/>
</dbReference>
<comment type="function">
    <text evidence="1">Nucleotidase that shows phosphatase activity on nucleoside 5'-monophosphates.</text>
</comment>
<comment type="catalytic activity">
    <reaction evidence="1">
        <text>a ribonucleoside 5'-phosphate + H2O = a ribonucleoside + phosphate</text>
        <dbReference type="Rhea" id="RHEA:12484"/>
        <dbReference type="ChEBI" id="CHEBI:15377"/>
        <dbReference type="ChEBI" id="CHEBI:18254"/>
        <dbReference type="ChEBI" id="CHEBI:43474"/>
        <dbReference type="ChEBI" id="CHEBI:58043"/>
        <dbReference type="EC" id="3.1.3.5"/>
    </reaction>
</comment>
<comment type="cofactor">
    <cofactor evidence="1">
        <name>a divalent metal cation</name>
        <dbReference type="ChEBI" id="CHEBI:60240"/>
    </cofactor>
    <text evidence="1">Binds 1 divalent metal cation per subunit.</text>
</comment>
<comment type="subcellular location">
    <subcellularLocation>
        <location evidence="1">Cytoplasm</location>
    </subcellularLocation>
</comment>
<comment type="similarity">
    <text evidence="1">Belongs to the SurE nucleotidase family.</text>
</comment>
<gene>
    <name evidence="1" type="primary">surE</name>
    <name type="ordered locus">Dalk_3823</name>
</gene>
<keyword id="KW-0963">Cytoplasm</keyword>
<keyword id="KW-0378">Hydrolase</keyword>
<keyword id="KW-0479">Metal-binding</keyword>
<keyword id="KW-0547">Nucleotide-binding</keyword>
<keyword id="KW-1185">Reference proteome</keyword>
<proteinExistence type="inferred from homology"/>
<feature type="chain" id="PRO_1000196592" description="5'-nucleotidase SurE">
    <location>
        <begin position="1"/>
        <end position="253"/>
    </location>
</feature>
<feature type="binding site" evidence="1">
    <location>
        <position position="8"/>
    </location>
    <ligand>
        <name>a divalent metal cation</name>
        <dbReference type="ChEBI" id="CHEBI:60240"/>
    </ligand>
</feature>
<feature type="binding site" evidence="1">
    <location>
        <position position="9"/>
    </location>
    <ligand>
        <name>a divalent metal cation</name>
        <dbReference type="ChEBI" id="CHEBI:60240"/>
    </ligand>
</feature>
<feature type="binding site" evidence="1">
    <location>
        <position position="39"/>
    </location>
    <ligand>
        <name>a divalent metal cation</name>
        <dbReference type="ChEBI" id="CHEBI:60240"/>
    </ligand>
</feature>
<feature type="binding site" evidence="1">
    <location>
        <position position="95"/>
    </location>
    <ligand>
        <name>a divalent metal cation</name>
        <dbReference type="ChEBI" id="CHEBI:60240"/>
    </ligand>
</feature>
<reference key="1">
    <citation type="journal article" date="2012" name="Environ. Microbiol.">
        <title>The genome sequence of Desulfatibacillum alkenivorans AK-01: a blueprint for anaerobic alkane oxidation.</title>
        <authorList>
            <person name="Callaghan A.V."/>
            <person name="Morris B.E."/>
            <person name="Pereira I.A."/>
            <person name="McInerney M.J."/>
            <person name="Austin R.N."/>
            <person name="Groves J.T."/>
            <person name="Kukor J.J."/>
            <person name="Suflita J.M."/>
            <person name="Young L.Y."/>
            <person name="Zylstra G.J."/>
            <person name="Wawrik B."/>
        </authorList>
    </citation>
    <scope>NUCLEOTIDE SEQUENCE [LARGE SCALE GENOMIC DNA]</scope>
    <source>
        <strain>AK-01</strain>
    </source>
</reference>
<accession>B8FC91</accession>
<organism>
    <name type="scientific">Desulfatibacillum aliphaticivorans</name>
    <dbReference type="NCBI Taxonomy" id="218208"/>
    <lineage>
        <taxon>Bacteria</taxon>
        <taxon>Pseudomonadati</taxon>
        <taxon>Thermodesulfobacteriota</taxon>
        <taxon>Desulfobacteria</taxon>
        <taxon>Desulfobacterales</taxon>
        <taxon>Desulfatibacillaceae</taxon>
        <taxon>Desulfatibacillum</taxon>
    </lineage>
</organism>
<evidence type="ECO:0000255" key="1">
    <source>
        <dbReference type="HAMAP-Rule" id="MF_00060"/>
    </source>
</evidence>
<name>SURE_DESAL</name>